<feature type="chain" id="PRO_0000073296" description="ATP synthase gamma chain">
    <location>
        <begin position="1"/>
        <end position="301"/>
    </location>
</feature>
<sequence length="301" mass="34128">MANLRDIRKKIGSVKNTQRITHAMKLVSTSKLRKAEEVARNSRAYALKLDAVFDDVLSKMKNQGIEDIQSKYFRELERLEIKKVDIIFITADKGLCGGFNTNTIKKVLACTNEYKEKDIKVRLRGIGKKGNEYFSFNGIEVLDKINNLSSMPNYERAQEFMKKVVEDYLSGKTDKVIIIHNGFKNMITQEIRVKTILPIGYKIIHQNPQPSETQETITSEPSGSEDEILDSLAEKYVEYSLYYALIDSLAAEHSARMQAMDTATNNAKDLVKTLTISYNKARQEAITTELVEINAGVEALK</sequence>
<gene>
    <name evidence="1" type="primary">atpG</name>
    <name type="ordered locus">jhp_1061</name>
</gene>
<name>ATPG_HELPJ</name>
<reference key="1">
    <citation type="journal article" date="1999" name="Nature">
        <title>Genomic sequence comparison of two unrelated isolates of the human gastric pathogen Helicobacter pylori.</title>
        <authorList>
            <person name="Alm R.A."/>
            <person name="Ling L.-S.L."/>
            <person name="Moir D.T."/>
            <person name="King B.L."/>
            <person name="Brown E.D."/>
            <person name="Doig P.C."/>
            <person name="Smith D.R."/>
            <person name="Noonan B."/>
            <person name="Guild B.C."/>
            <person name="deJonge B.L."/>
            <person name="Carmel G."/>
            <person name="Tummino P.J."/>
            <person name="Caruso A."/>
            <person name="Uria-Nickelsen M."/>
            <person name="Mills D.M."/>
            <person name="Ives C."/>
            <person name="Gibson R."/>
            <person name="Merberg D."/>
            <person name="Mills S.D."/>
            <person name="Jiang Q."/>
            <person name="Taylor D.E."/>
            <person name="Vovis G.F."/>
            <person name="Trust T.J."/>
        </authorList>
    </citation>
    <scope>NUCLEOTIDE SEQUENCE [LARGE SCALE GENOMIC DNA]</scope>
    <source>
        <strain>J99 / ATCC 700824</strain>
    </source>
</reference>
<organism>
    <name type="scientific">Helicobacter pylori (strain J99 / ATCC 700824)</name>
    <name type="common">Campylobacter pylori J99</name>
    <dbReference type="NCBI Taxonomy" id="85963"/>
    <lineage>
        <taxon>Bacteria</taxon>
        <taxon>Pseudomonadati</taxon>
        <taxon>Campylobacterota</taxon>
        <taxon>Epsilonproteobacteria</taxon>
        <taxon>Campylobacterales</taxon>
        <taxon>Helicobacteraceae</taxon>
        <taxon>Helicobacter</taxon>
    </lineage>
</organism>
<comment type="function">
    <text evidence="1">Produces ATP from ADP in the presence of a proton gradient across the membrane. The gamma chain is believed to be important in regulating ATPase activity and the flow of protons through the CF(0) complex.</text>
</comment>
<comment type="subunit">
    <text evidence="1">F-type ATPases have 2 components, CF(1) - the catalytic core - and CF(0) - the membrane proton channel. CF(1) has five subunits: alpha(3), beta(3), gamma(1), delta(1), epsilon(1). CF(0) has three main subunits: a, b and c.</text>
</comment>
<comment type="subcellular location">
    <subcellularLocation>
        <location evidence="1">Cell inner membrane</location>
        <topology evidence="1">Peripheral membrane protein</topology>
    </subcellularLocation>
</comment>
<comment type="similarity">
    <text evidence="1">Belongs to the ATPase gamma chain family.</text>
</comment>
<keyword id="KW-0066">ATP synthesis</keyword>
<keyword id="KW-0997">Cell inner membrane</keyword>
<keyword id="KW-1003">Cell membrane</keyword>
<keyword id="KW-0139">CF(1)</keyword>
<keyword id="KW-0375">Hydrogen ion transport</keyword>
<keyword id="KW-0406">Ion transport</keyword>
<keyword id="KW-0472">Membrane</keyword>
<keyword id="KW-0813">Transport</keyword>
<evidence type="ECO:0000255" key="1">
    <source>
        <dbReference type="HAMAP-Rule" id="MF_00815"/>
    </source>
</evidence>
<dbReference type="EMBL" id="AE001439">
    <property type="protein sequence ID" value="AAD06626.1"/>
    <property type="molecule type" value="Genomic_DNA"/>
</dbReference>
<dbReference type="PIR" id="E71855">
    <property type="entry name" value="E71855"/>
</dbReference>
<dbReference type="RefSeq" id="WP_000002225.1">
    <property type="nucleotide sequence ID" value="NC_000921.1"/>
</dbReference>
<dbReference type="SMR" id="Q9ZK80"/>
<dbReference type="KEGG" id="hpj:jhp_1061"/>
<dbReference type="PATRIC" id="fig|85963.30.peg.1527"/>
<dbReference type="eggNOG" id="COG0224">
    <property type="taxonomic scope" value="Bacteria"/>
</dbReference>
<dbReference type="Proteomes" id="UP000000804">
    <property type="component" value="Chromosome"/>
</dbReference>
<dbReference type="GO" id="GO:0005886">
    <property type="term" value="C:plasma membrane"/>
    <property type="evidence" value="ECO:0007669"/>
    <property type="project" value="UniProtKB-SubCell"/>
</dbReference>
<dbReference type="GO" id="GO:0045259">
    <property type="term" value="C:proton-transporting ATP synthase complex"/>
    <property type="evidence" value="ECO:0007669"/>
    <property type="project" value="UniProtKB-KW"/>
</dbReference>
<dbReference type="GO" id="GO:0005524">
    <property type="term" value="F:ATP binding"/>
    <property type="evidence" value="ECO:0007669"/>
    <property type="project" value="UniProtKB-UniRule"/>
</dbReference>
<dbReference type="GO" id="GO:0046933">
    <property type="term" value="F:proton-transporting ATP synthase activity, rotational mechanism"/>
    <property type="evidence" value="ECO:0007669"/>
    <property type="project" value="UniProtKB-UniRule"/>
</dbReference>
<dbReference type="GO" id="GO:0042777">
    <property type="term" value="P:proton motive force-driven plasma membrane ATP synthesis"/>
    <property type="evidence" value="ECO:0007669"/>
    <property type="project" value="UniProtKB-UniRule"/>
</dbReference>
<dbReference type="CDD" id="cd12151">
    <property type="entry name" value="F1-ATPase_gamma"/>
    <property type="match status" value="1"/>
</dbReference>
<dbReference type="FunFam" id="1.10.287.80:FF:000007">
    <property type="entry name" value="ATP synthase gamma chain"/>
    <property type="match status" value="1"/>
</dbReference>
<dbReference type="FunFam" id="3.40.1380.10:FF:000006">
    <property type="entry name" value="ATP synthase gamma chain"/>
    <property type="match status" value="1"/>
</dbReference>
<dbReference type="Gene3D" id="3.40.1380.10">
    <property type="match status" value="1"/>
</dbReference>
<dbReference type="Gene3D" id="1.10.287.80">
    <property type="entry name" value="ATP synthase, gamma subunit, helix hairpin domain"/>
    <property type="match status" value="2"/>
</dbReference>
<dbReference type="HAMAP" id="MF_00815">
    <property type="entry name" value="ATP_synth_gamma_bact"/>
    <property type="match status" value="1"/>
</dbReference>
<dbReference type="InterPro" id="IPR035968">
    <property type="entry name" value="ATP_synth_F1_ATPase_gsu"/>
</dbReference>
<dbReference type="InterPro" id="IPR000131">
    <property type="entry name" value="ATP_synth_F1_gsu"/>
</dbReference>
<dbReference type="NCBIfam" id="TIGR01146">
    <property type="entry name" value="ATPsyn_F1gamma"/>
    <property type="match status" value="1"/>
</dbReference>
<dbReference type="PANTHER" id="PTHR11693">
    <property type="entry name" value="ATP SYNTHASE GAMMA CHAIN"/>
    <property type="match status" value="1"/>
</dbReference>
<dbReference type="PANTHER" id="PTHR11693:SF22">
    <property type="entry name" value="ATP SYNTHASE SUBUNIT GAMMA, MITOCHONDRIAL"/>
    <property type="match status" value="1"/>
</dbReference>
<dbReference type="Pfam" id="PF00231">
    <property type="entry name" value="ATP-synt"/>
    <property type="match status" value="1"/>
</dbReference>
<dbReference type="PRINTS" id="PR00126">
    <property type="entry name" value="ATPASEGAMMA"/>
</dbReference>
<dbReference type="SUPFAM" id="SSF52943">
    <property type="entry name" value="ATP synthase (F1-ATPase), gamma subunit"/>
    <property type="match status" value="1"/>
</dbReference>
<proteinExistence type="inferred from homology"/>
<protein>
    <recommendedName>
        <fullName evidence="1">ATP synthase gamma chain</fullName>
    </recommendedName>
    <alternativeName>
        <fullName evidence="1">ATP synthase F1 sector gamma subunit</fullName>
    </alternativeName>
    <alternativeName>
        <fullName evidence="1">F-ATPase gamma subunit</fullName>
    </alternativeName>
</protein>
<accession>Q9ZK80</accession>